<dbReference type="GO" id="GO:0005576">
    <property type="term" value="C:extracellular region"/>
    <property type="evidence" value="ECO:0000314"/>
    <property type="project" value="UniProtKB"/>
</dbReference>
<dbReference type="GO" id="GO:0090729">
    <property type="term" value="F:toxin activity"/>
    <property type="evidence" value="ECO:0007669"/>
    <property type="project" value="UniProtKB-KW"/>
</dbReference>
<dbReference type="GO" id="GO:0097746">
    <property type="term" value="P:blood vessel diameter maintenance"/>
    <property type="evidence" value="ECO:0000314"/>
    <property type="project" value="UniProtKB"/>
</dbReference>
<dbReference type="GO" id="GO:0006952">
    <property type="term" value="P:defense response"/>
    <property type="evidence" value="ECO:0000314"/>
    <property type="project" value="UniProtKB"/>
</dbReference>
<dbReference type="GO" id="GO:0042311">
    <property type="term" value="P:vasodilation"/>
    <property type="evidence" value="ECO:0007669"/>
    <property type="project" value="UniProtKB-KW"/>
</dbReference>
<keyword id="KW-0878">Amphibian defense peptide</keyword>
<keyword id="KW-0903">Direct protein sequencing</keyword>
<keyword id="KW-1213">G-protein coupled receptor impairing toxin</keyword>
<keyword id="KW-0964">Secreted</keyword>
<keyword id="KW-0800">Toxin</keyword>
<keyword id="KW-0838">Vasoactive</keyword>
<keyword id="KW-0840">Vasodilator</keyword>
<proteinExistence type="evidence at protein level"/>
<feature type="peptide" id="PRO_0000233937" description="Bradykinin-like peptide RD-11">
    <location>
        <begin position="1"/>
        <end position="11"/>
    </location>
</feature>
<comment type="function">
    <text evidence="1">Induces relaxation of mouse trachea that has been precontracted with methacholine. May induce relaxation of arterial smooth muscle. May target bradykinin receptors (BDKRB).</text>
</comment>
<comment type="subcellular location">
    <subcellularLocation>
        <location evidence="1">Secreted</location>
    </subcellularLocation>
</comment>
<comment type="tissue specificity">
    <text evidence="1">Expressed by the skin glands.</text>
</comment>
<comment type="mass spectrometry" mass="1273.7" method="MALDI" evidence="1"/>
<comment type="similarity">
    <text evidence="2">Belongs to the bradykinin-related peptide family.</text>
</comment>
<reference evidence="2" key="1">
    <citation type="journal article" date="2005" name="Gen. Comp. Endocrinol.">
        <title>Bradykinin-related peptides and tryptophyllins in the skin secretions of the most primitive extant frog, Ascaphus truei.</title>
        <authorList>
            <person name="Conlon J.M."/>
            <person name="Jouenne T."/>
            <person name="Cosette P."/>
            <person name="Cosquer D."/>
            <person name="Vaudry H."/>
            <person name="Taylor C.K."/>
            <person name="Abel P.W."/>
        </authorList>
    </citation>
    <scope>PROTEIN SEQUENCE</scope>
    <scope>FUNCTION</scope>
    <scope>SUBCELLULAR LOCATION</scope>
    <scope>TISSUE SPECIFICITY</scope>
    <scope>MASS SPECTROMETRY</scope>
    <source>
        <tissue evidence="1">Skin secretion</tissue>
    </source>
</reference>
<accession>P84824</accession>
<sequence length="11" mass="1274">RPPGFSPFRVD</sequence>
<protein>
    <recommendedName>
        <fullName>Bradykinin-like peptide RD-11</fullName>
    </recommendedName>
</protein>
<name>BRK11_ASCTR</name>
<evidence type="ECO:0000269" key="1">
    <source>
    </source>
</evidence>
<evidence type="ECO:0000305" key="2"/>
<organism>
    <name type="scientific">Ascaphus truei</name>
    <name type="common">Coastal tailed frog</name>
    <dbReference type="NCBI Taxonomy" id="8439"/>
    <lineage>
        <taxon>Eukaryota</taxon>
        <taxon>Metazoa</taxon>
        <taxon>Chordata</taxon>
        <taxon>Craniata</taxon>
        <taxon>Vertebrata</taxon>
        <taxon>Euteleostomi</taxon>
        <taxon>Amphibia</taxon>
        <taxon>Batrachia</taxon>
        <taxon>Anura</taxon>
        <taxon>Ascaphidae</taxon>
        <taxon>Ascaphus</taxon>
    </lineage>
</organism>